<name>RNPA_PETMO</name>
<proteinExistence type="inferred from homology"/>
<gene>
    <name evidence="1" type="primary">rnpA</name>
    <name type="ordered locus">Pmob_0604</name>
</gene>
<keyword id="KW-0255">Endonuclease</keyword>
<keyword id="KW-0378">Hydrolase</keyword>
<keyword id="KW-0540">Nuclease</keyword>
<keyword id="KW-0694">RNA-binding</keyword>
<keyword id="KW-0819">tRNA processing</keyword>
<sequence>MEGQTFKKKERLRLKRNFKNVFEKGGRLIDNNFVIIYVPNTMDYNRIAVIVNRKFGNAVVRNLIKRYIREIYRTNKTFFPLGYDFVFIPRKELSKNFKGIDYSQIKNQILKLVRKLEA</sequence>
<dbReference type="EC" id="3.1.26.5" evidence="1"/>
<dbReference type="EMBL" id="CP000879">
    <property type="protein sequence ID" value="ABX31338.1"/>
    <property type="molecule type" value="Genomic_DNA"/>
</dbReference>
<dbReference type="RefSeq" id="WP_012208442.1">
    <property type="nucleotide sequence ID" value="NC_010003.1"/>
</dbReference>
<dbReference type="SMR" id="A9BJC4"/>
<dbReference type="STRING" id="403833.Pmob_0604"/>
<dbReference type="KEGG" id="pmo:Pmob_0604"/>
<dbReference type="eggNOG" id="COG0594">
    <property type="taxonomic scope" value="Bacteria"/>
</dbReference>
<dbReference type="HOGENOM" id="CLU_117179_9_2_0"/>
<dbReference type="OrthoDB" id="9810867at2"/>
<dbReference type="Proteomes" id="UP000000789">
    <property type="component" value="Chromosome"/>
</dbReference>
<dbReference type="GO" id="GO:0030677">
    <property type="term" value="C:ribonuclease P complex"/>
    <property type="evidence" value="ECO:0007669"/>
    <property type="project" value="TreeGrafter"/>
</dbReference>
<dbReference type="GO" id="GO:0042781">
    <property type="term" value="F:3'-tRNA processing endoribonuclease activity"/>
    <property type="evidence" value="ECO:0007669"/>
    <property type="project" value="TreeGrafter"/>
</dbReference>
<dbReference type="GO" id="GO:0004526">
    <property type="term" value="F:ribonuclease P activity"/>
    <property type="evidence" value="ECO:0007669"/>
    <property type="project" value="UniProtKB-UniRule"/>
</dbReference>
<dbReference type="GO" id="GO:0000049">
    <property type="term" value="F:tRNA binding"/>
    <property type="evidence" value="ECO:0007669"/>
    <property type="project" value="UniProtKB-UniRule"/>
</dbReference>
<dbReference type="GO" id="GO:0001682">
    <property type="term" value="P:tRNA 5'-leader removal"/>
    <property type="evidence" value="ECO:0007669"/>
    <property type="project" value="UniProtKB-UniRule"/>
</dbReference>
<dbReference type="Gene3D" id="3.30.230.10">
    <property type="match status" value="1"/>
</dbReference>
<dbReference type="HAMAP" id="MF_00227">
    <property type="entry name" value="RNase_P"/>
    <property type="match status" value="1"/>
</dbReference>
<dbReference type="InterPro" id="IPR020568">
    <property type="entry name" value="Ribosomal_Su5_D2-typ_SF"/>
</dbReference>
<dbReference type="InterPro" id="IPR014721">
    <property type="entry name" value="Ribsml_uS5_D2-typ_fold_subgr"/>
</dbReference>
<dbReference type="InterPro" id="IPR000100">
    <property type="entry name" value="RNase_P"/>
</dbReference>
<dbReference type="InterPro" id="IPR020539">
    <property type="entry name" value="RNase_P_CS"/>
</dbReference>
<dbReference type="NCBIfam" id="TIGR00188">
    <property type="entry name" value="rnpA"/>
    <property type="match status" value="1"/>
</dbReference>
<dbReference type="PANTHER" id="PTHR33992">
    <property type="entry name" value="RIBONUCLEASE P PROTEIN COMPONENT"/>
    <property type="match status" value="1"/>
</dbReference>
<dbReference type="PANTHER" id="PTHR33992:SF1">
    <property type="entry name" value="RIBONUCLEASE P PROTEIN COMPONENT"/>
    <property type="match status" value="1"/>
</dbReference>
<dbReference type="Pfam" id="PF00825">
    <property type="entry name" value="Ribonuclease_P"/>
    <property type="match status" value="1"/>
</dbReference>
<dbReference type="SUPFAM" id="SSF54211">
    <property type="entry name" value="Ribosomal protein S5 domain 2-like"/>
    <property type="match status" value="1"/>
</dbReference>
<dbReference type="PROSITE" id="PS00648">
    <property type="entry name" value="RIBONUCLEASE_P"/>
    <property type="match status" value="1"/>
</dbReference>
<reference key="1">
    <citation type="submission" date="2007-11" db="EMBL/GenBank/DDBJ databases">
        <title>Complete sequence of Petroga mobilis SJ95.</title>
        <authorList>
            <consortium name="US DOE Joint Genome Institute"/>
            <person name="Copeland A."/>
            <person name="Lucas S."/>
            <person name="Lapidus A."/>
            <person name="Barry K."/>
            <person name="Glavina del Rio T."/>
            <person name="Dalin E."/>
            <person name="Tice H."/>
            <person name="Pitluck S."/>
            <person name="Meincke L."/>
            <person name="Brettin T."/>
            <person name="Bruce D."/>
            <person name="Detter J.C."/>
            <person name="Han C."/>
            <person name="Kuske C.R."/>
            <person name="Schmutz J."/>
            <person name="Larimer F."/>
            <person name="Land M."/>
            <person name="Hauser L."/>
            <person name="Kyrpides N."/>
            <person name="Mikhailova N."/>
            <person name="Noll K."/>
            <person name="Richardson P."/>
        </authorList>
    </citation>
    <scope>NUCLEOTIDE SEQUENCE [LARGE SCALE GENOMIC DNA]</scope>
    <source>
        <strain>DSM 10674 / SJ95</strain>
    </source>
</reference>
<organism>
    <name type="scientific">Petrotoga mobilis (strain DSM 10674 / SJ95)</name>
    <dbReference type="NCBI Taxonomy" id="403833"/>
    <lineage>
        <taxon>Bacteria</taxon>
        <taxon>Thermotogati</taxon>
        <taxon>Thermotogota</taxon>
        <taxon>Thermotogae</taxon>
        <taxon>Petrotogales</taxon>
        <taxon>Petrotogaceae</taxon>
        <taxon>Petrotoga</taxon>
    </lineage>
</organism>
<evidence type="ECO:0000255" key="1">
    <source>
        <dbReference type="HAMAP-Rule" id="MF_00227"/>
    </source>
</evidence>
<accession>A9BJC4</accession>
<comment type="function">
    <text evidence="1">RNaseP catalyzes the removal of the 5'-leader sequence from pre-tRNA to produce the mature 5'-terminus. It can also cleave other RNA substrates such as 4.5S RNA. The protein component plays an auxiliary but essential role in vivo by binding to the 5'-leader sequence and broadening the substrate specificity of the ribozyme.</text>
</comment>
<comment type="catalytic activity">
    <reaction evidence="1">
        <text>Endonucleolytic cleavage of RNA, removing 5'-extranucleotides from tRNA precursor.</text>
        <dbReference type="EC" id="3.1.26.5"/>
    </reaction>
</comment>
<comment type="subunit">
    <text evidence="1">Consists of a catalytic RNA component (M1 or rnpB) and a protein subunit.</text>
</comment>
<comment type="similarity">
    <text evidence="1">Belongs to the RnpA family.</text>
</comment>
<feature type="chain" id="PRO_1000078203" description="Ribonuclease P protein component">
    <location>
        <begin position="1"/>
        <end position="118"/>
    </location>
</feature>
<protein>
    <recommendedName>
        <fullName evidence="1">Ribonuclease P protein component</fullName>
        <shortName evidence="1">RNase P protein</shortName>
        <shortName evidence="1">RNaseP protein</shortName>
        <ecNumber evidence="1">3.1.26.5</ecNumber>
    </recommendedName>
    <alternativeName>
        <fullName evidence="1">Protein C5</fullName>
    </alternativeName>
</protein>